<feature type="chain" id="PRO_1000017797" description="Methylglyoxal synthase">
    <location>
        <begin position="1"/>
        <end position="130"/>
    </location>
</feature>
<feature type="domain" description="MGS-like" evidence="1">
    <location>
        <begin position="1"/>
        <end position="130"/>
    </location>
</feature>
<feature type="active site" description="Proton donor/acceptor" evidence="1">
    <location>
        <position position="63"/>
    </location>
</feature>
<feature type="binding site" evidence="1">
    <location>
        <position position="11"/>
    </location>
    <ligand>
        <name>substrate</name>
    </ligand>
</feature>
<feature type="binding site" evidence="1">
    <location>
        <position position="15"/>
    </location>
    <ligand>
        <name>substrate</name>
    </ligand>
</feature>
<feature type="binding site" evidence="1">
    <location>
        <begin position="37"/>
        <end position="40"/>
    </location>
    <ligand>
        <name>substrate</name>
    </ligand>
</feature>
<feature type="binding site" evidence="1">
    <location>
        <begin position="57"/>
        <end position="58"/>
    </location>
    <ligand>
        <name>substrate</name>
    </ligand>
</feature>
<feature type="binding site" evidence="1">
    <location>
        <position position="90"/>
    </location>
    <ligand>
        <name>substrate</name>
    </ligand>
</feature>
<organism>
    <name type="scientific">Burkholderia pseudomallei (strain 668)</name>
    <dbReference type="NCBI Taxonomy" id="320373"/>
    <lineage>
        <taxon>Bacteria</taxon>
        <taxon>Pseudomonadati</taxon>
        <taxon>Pseudomonadota</taxon>
        <taxon>Betaproteobacteria</taxon>
        <taxon>Burkholderiales</taxon>
        <taxon>Burkholderiaceae</taxon>
        <taxon>Burkholderia</taxon>
        <taxon>pseudomallei group</taxon>
    </lineage>
</organism>
<dbReference type="EC" id="4.2.3.3" evidence="1"/>
<dbReference type="EMBL" id="CP000570">
    <property type="protein sequence ID" value="ABN82714.1"/>
    <property type="molecule type" value="Genomic_DNA"/>
</dbReference>
<dbReference type="RefSeq" id="WP_004186317.1">
    <property type="nucleotide sequence ID" value="NC_009074.1"/>
</dbReference>
<dbReference type="SMR" id="A3N7G3"/>
<dbReference type="KEGG" id="bpd:BURPS668_1235"/>
<dbReference type="HOGENOM" id="CLU_120420_1_0_4"/>
<dbReference type="GO" id="GO:0005829">
    <property type="term" value="C:cytosol"/>
    <property type="evidence" value="ECO:0007669"/>
    <property type="project" value="TreeGrafter"/>
</dbReference>
<dbReference type="GO" id="GO:0008929">
    <property type="term" value="F:methylglyoxal synthase activity"/>
    <property type="evidence" value="ECO:0007669"/>
    <property type="project" value="UniProtKB-UniRule"/>
</dbReference>
<dbReference type="GO" id="GO:0019242">
    <property type="term" value="P:methylglyoxal biosynthetic process"/>
    <property type="evidence" value="ECO:0007669"/>
    <property type="project" value="UniProtKB-UniRule"/>
</dbReference>
<dbReference type="CDD" id="cd01422">
    <property type="entry name" value="MGS"/>
    <property type="match status" value="1"/>
</dbReference>
<dbReference type="Gene3D" id="3.40.50.1380">
    <property type="entry name" value="Methylglyoxal synthase-like domain"/>
    <property type="match status" value="1"/>
</dbReference>
<dbReference type="HAMAP" id="MF_00549">
    <property type="entry name" value="Methylglyoxal_synth"/>
    <property type="match status" value="1"/>
</dbReference>
<dbReference type="InterPro" id="IPR004363">
    <property type="entry name" value="Methylgl_synth"/>
</dbReference>
<dbReference type="InterPro" id="IPR018148">
    <property type="entry name" value="Methylglyoxal_synth_AS"/>
</dbReference>
<dbReference type="InterPro" id="IPR011607">
    <property type="entry name" value="MGS-like_dom"/>
</dbReference>
<dbReference type="InterPro" id="IPR036914">
    <property type="entry name" value="MGS-like_dom_sf"/>
</dbReference>
<dbReference type="NCBIfam" id="TIGR00160">
    <property type="entry name" value="MGSA"/>
    <property type="match status" value="1"/>
</dbReference>
<dbReference type="NCBIfam" id="NF003559">
    <property type="entry name" value="PRK05234.1"/>
    <property type="match status" value="1"/>
</dbReference>
<dbReference type="PANTHER" id="PTHR30492">
    <property type="entry name" value="METHYLGLYOXAL SYNTHASE"/>
    <property type="match status" value="1"/>
</dbReference>
<dbReference type="PANTHER" id="PTHR30492:SF0">
    <property type="entry name" value="METHYLGLYOXAL SYNTHASE"/>
    <property type="match status" value="1"/>
</dbReference>
<dbReference type="Pfam" id="PF02142">
    <property type="entry name" value="MGS"/>
    <property type="match status" value="1"/>
</dbReference>
<dbReference type="PIRSF" id="PIRSF006614">
    <property type="entry name" value="Methylglyox_syn"/>
    <property type="match status" value="1"/>
</dbReference>
<dbReference type="SMART" id="SM00851">
    <property type="entry name" value="MGS"/>
    <property type="match status" value="1"/>
</dbReference>
<dbReference type="SUPFAM" id="SSF52335">
    <property type="entry name" value="Methylglyoxal synthase-like"/>
    <property type="match status" value="1"/>
</dbReference>
<dbReference type="PROSITE" id="PS01335">
    <property type="entry name" value="METHYLGLYOXAL_SYNTH"/>
    <property type="match status" value="1"/>
</dbReference>
<dbReference type="PROSITE" id="PS51855">
    <property type="entry name" value="MGS"/>
    <property type="match status" value="1"/>
</dbReference>
<proteinExistence type="inferred from homology"/>
<accession>A3N7G3</accession>
<name>MGSA_BURP6</name>
<comment type="function">
    <text evidence="1">Catalyzes the formation of methylglyoxal from dihydroxyacetone phosphate.</text>
</comment>
<comment type="catalytic activity">
    <reaction evidence="1">
        <text>dihydroxyacetone phosphate = methylglyoxal + phosphate</text>
        <dbReference type="Rhea" id="RHEA:17937"/>
        <dbReference type="ChEBI" id="CHEBI:17158"/>
        <dbReference type="ChEBI" id="CHEBI:43474"/>
        <dbReference type="ChEBI" id="CHEBI:57642"/>
        <dbReference type="EC" id="4.2.3.3"/>
    </reaction>
</comment>
<comment type="similarity">
    <text evidence="1">Belongs to the methylglyoxal synthase family.</text>
</comment>
<evidence type="ECO:0000255" key="1">
    <source>
        <dbReference type="HAMAP-Rule" id="MF_00549"/>
    </source>
</evidence>
<protein>
    <recommendedName>
        <fullName evidence="1">Methylglyoxal synthase</fullName>
        <shortName evidence="1">MGS</shortName>
        <ecNumber evidence="1">4.2.3.3</ecNumber>
    </recommendedName>
</protein>
<sequence>MSTPRIALIAHDAKKDDIVALAGAYRATLAQCRLVATGTTGGRIAQAHGLDVERKLSGPLGGDLQIGAELADGRVDIVIFLRDPMTAQPHDPDITALVRACDVHDVPVATNVATARVLLDDLARRLTANA</sequence>
<keyword id="KW-0456">Lyase</keyword>
<reference key="1">
    <citation type="journal article" date="2010" name="Genome Biol. Evol.">
        <title>Continuing evolution of Burkholderia mallei through genome reduction and large-scale rearrangements.</title>
        <authorList>
            <person name="Losada L."/>
            <person name="Ronning C.M."/>
            <person name="DeShazer D."/>
            <person name="Woods D."/>
            <person name="Fedorova N."/>
            <person name="Kim H.S."/>
            <person name="Shabalina S.A."/>
            <person name="Pearson T.R."/>
            <person name="Brinkac L."/>
            <person name="Tan P."/>
            <person name="Nandi T."/>
            <person name="Crabtree J."/>
            <person name="Badger J."/>
            <person name="Beckstrom-Sternberg S."/>
            <person name="Saqib M."/>
            <person name="Schutzer S.E."/>
            <person name="Keim P."/>
            <person name="Nierman W.C."/>
        </authorList>
    </citation>
    <scope>NUCLEOTIDE SEQUENCE [LARGE SCALE GENOMIC DNA]</scope>
    <source>
        <strain>668</strain>
    </source>
</reference>
<gene>
    <name evidence="1" type="primary">mgsA</name>
    <name type="ordered locus">BURPS668_1235</name>
</gene>